<name>RSMG_ACIBT</name>
<comment type="function">
    <text evidence="1">Specifically methylates the N7 position of guanine in position 527 of 16S rRNA.</text>
</comment>
<comment type="catalytic activity">
    <reaction evidence="1">
        <text>guanosine(527) in 16S rRNA + S-adenosyl-L-methionine = N(7)-methylguanosine(527) in 16S rRNA + S-adenosyl-L-homocysteine</text>
        <dbReference type="Rhea" id="RHEA:42732"/>
        <dbReference type="Rhea" id="RHEA-COMP:10209"/>
        <dbReference type="Rhea" id="RHEA-COMP:10210"/>
        <dbReference type="ChEBI" id="CHEBI:57856"/>
        <dbReference type="ChEBI" id="CHEBI:59789"/>
        <dbReference type="ChEBI" id="CHEBI:74269"/>
        <dbReference type="ChEBI" id="CHEBI:74480"/>
        <dbReference type="EC" id="2.1.1.170"/>
    </reaction>
</comment>
<comment type="subcellular location">
    <subcellularLocation>
        <location evidence="1">Cytoplasm</location>
    </subcellularLocation>
</comment>
<comment type="similarity">
    <text evidence="1">Belongs to the methyltransferase superfamily. RNA methyltransferase RsmG family.</text>
</comment>
<evidence type="ECO:0000255" key="1">
    <source>
        <dbReference type="HAMAP-Rule" id="MF_00074"/>
    </source>
</evidence>
<keyword id="KW-0963">Cytoplasm</keyword>
<keyword id="KW-0489">Methyltransferase</keyword>
<keyword id="KW-0698">rRNA processing</keyword>
<keyword id="KW-0949">S-adenosyl-L-methionine</keyword>
<keyword id="KW-0808">Transferase</keyword>
<accession>A3M4Y3</accession>
<dbReference type="EC" id="2.1.1.170" evidence="1"/>
<dbReference type="EMBL" id="CP000521">
    <property type="protein sequence ID" value="ABO11977.2"/>
    <property type="molecule type" value="Genomic_DNA"/>
</dbReference>
<dbReference type="RefSeq" id="WP_000553193.1">
    <property type="nucleotide sequence ID" value="NZ_CP053098.1"/>
</dbReference>
<dbReference type="SMR" id="A3M4Y3"/>
<dbReference type="GeneID" id="92893779"/>
<dbReference type="KEGG" id="acb:A1S_1550"/>
<dbReference type="HOGENOM" id="CLU_065341_2_0_6"/>
<dbReference type="GO" id="GO:0005829">
    <property type="term" value="C:cytosol"/>
    <property type="evidence" value="ECO:0007669"/>
    <property type="project" value="TreeGrafter"/>
</dbReference>
<dbReference type="GO" id="GO:0070043">
    <property type="term" value="F:rRNA (guanine-N7-)-methyltransferase activity"/>
    <property type="evidence" value="ECO:0007669"/>
    <property type="project" value="UniProtKB-UniRule"/>
</dbReference>
<dbReference type="Gene3D" id="3.40.50.150">
    <property type="entry name" value="Vaccinia Virus protein VP39"/>
    <property type="match status" value="1"/>
</dbReference>
<dbReference type="HAMAP" id="MF_00074">
    <property type="entry name" value="16SrRNA_methyltr_G"/>
    <property type="match status" value="1"/>
</dbReference>
<dbReference type="InterPro" id="IPR003682">
    <property type="entry name" value="rRNA_ssu_MeTfrase_G"/>
</dbReference>
<dbReference type="InterPro" id="IPR029063">
    <property type="entry name" value="SAM-dependent_MTases_sf"/>
</dbReference>
<dbReference type="NCBIfam" id="TIGR00138">
    <property type="entry name" value="rsmG_gidB"/>
    <property type="match status" value="1"/>
</dbReference>
<dbReference type="PANTHER" id="PTHR31760">
    <property type="entry name" value="S-ADENOSYL-L-METHIONINE-DEPENDENT METHYLTRANSFERASES SUPERFAMILY PROTEIN"/>
    <property type="match status" value="1"/>
</dbReference>
<dbReference type="PANTHER" id="PTHR31760:SF0">
    <property type="entry name" value="S-ADENOSYL-L-METHIONINE-DEPENDENT METHYLTRANSFERASES SUPERFAMILY PROTEIN"/>
    <property type="match status" value="1"/>
</dbReference>
<dbReference type="Pfam" id="PF02527">
    <property type="entry name" value="GidB"/>
    <property type="match status" value="1"/>
</dbReference>
<dbReference type="PIRSF" id="PIRSF003078">
    <property type="entry name" value="GidB"/>
    <property type="match status" value="1"/>
</dbReference>
<dbReference type="SUPFAM" id="SSF53335">
    <property type="entry name" value="S-adenosyl-L-methionine-dependent methyltransferases"/>
    <property type="match status" value="1"/>
</dbReference>
<reference key="1">
    <citation type="journal article" date="2007" name="Genes Dev.">
        <title>New insights into Acinetobacter baumannii pathogenesis revealed by high-density pyrosequencing and transposon mutagenesis.</title>
        <authorList>
            <person name="Smith M.G."/>
            <person name="Gianoulis T.A."/>
            <person name="Pukatzki S."/>
            <person name="Mekalanos J.J."/>
            <person name="Ornston L.N."/>
            <person name="Gerstein M."/>
            <person name="Snyder M."/>
        </authorList>
    </citation>
    <scope>NUCLEOTIDE SEQUENCE [LARGE SCALE GENOMIC DNA]</scope>
    <source>
        <strain>ATCC 17978 / DSM 105126 / CIP 53.77 / LMG 1025 / NCDC KC755 / 5377</strain>
    </source>
</reference>
<sequence length="210" mass="23720">MHPFFQELQQGSQKLGLSLSDEALTLLLKYQDALVLWNKAYNLTAIRDPKEMLVKHLLDSLSILKDLPAGRLLDVGTGGGMPGMIIALCQPERSCVLLDSNGKKIRFLKQFIADLKLKNVIAVQTRVENQDTIDELGQFDVITSRAFASLTDFVEAARPYLHEQSIIAAMKGLIPVEEMEELKQEFSCKVIELHVPRLDEQRHLLLLQRI</sequence>
<gene>
    <name evidence="1" type="primary">rsmG</name>
    <name type="ordered locus">A1S_1550</name>
</gene>
<organism>
    <name type="scientific">Acinetobacter baumannii (strain ATCC 17978 / DSM 105126 / CIP 53.77 / LMG 1025 / NCDC KC755 / 5377)</name>
    <dbReference type="NCBI Taxonomy" id="400667"/>
    <lineage>
        <taxon>Bacteria</taxon>
        <taxon>Pseudomonadati</taxon>
        <taxon>Pseudomonadota</taxon>
        <taxon>Gammaproteobacteria</taxon>
        <taxon>Moraxellales</taxon>
        <taxon>Moraxellaceae</taxon>
        <taxon>Acinetobacter</taxon>
        <taxon>Acinetobacter calcoaceticus/baumannii complex</taxon>
    </lineage>
</organism>
<feature type="chain" id="PRO_0000342900" description="Ribosomal RNA small subunit methyltransferase G">
    <location>
        <begin position="1"/>
        <end position="210"/>
    </location>
</feature>
<feature type="binding site" evidence="1">
    <location>
        <position position="76"/>
    </location>
    <ligand>
        <name>S-adenosyl-L-methionine</name>
        <dbReference type="ChEBI" id="CHEBI:59789"/>
    </ligand>
</feature>
<feature type="binding site" evidence="1">
    <location>
        <position position="81"/>
    </location>
    <ligand>
        <name>S-adenosyl-L-methionine</name>
        <dbReference type="ChEBI" id="CHEBI:59789"/>
    </ligand>
</feature>
<feature type="binding site" evidence="1">
    <location>
        <begin position="127"/>
        <end position="128"/>
    </location>
    <ligand>
        <name>S-adenosyl-L-methionine</name>
        <dbReference type="ChEBI" id="CHEBI:59789"/>
    </ligand>
</feature>
<feature type="binding site" evidence="1">
    <location>
        <position position="145"/>
    </location>
    <ligand>
        <name>S-adenosyl-L-methionine</name>
        <dbReference type="ChEBI" id="CHEBI:59789"/>
    </ligand>
</feature>
<proteinExistence type="inferred from homology"/>
<protein>
    <recommendedName>
        <fullName evidence="1">Ribosomal RNA small subunit methyltransferase G</fullName>
        <ecNumber evidence="1">2.1.1.170</ecNumber>
    </recommendedName>
    <alternativeName>
        <fullName evidence="1">16S rRNA 7-methylguanosine methyltransferase</fullName>
        <shortName evidence="1">16S rRNA m7G methyltransferase</shortName>
    </alternativeName>
</protein>